<accession>Q5R6Y2</accession>
<organism>
    <name type="scientific">Pongo abelii</name>
    <name type="common">Sumatran orangutan</name>
    <name type="synonym">Pongo pygmaeus abelii</name>
    <dbReference type="NCBI Taxonomy" id="9601"/>
    <lineage>
        <taxon>Eukaryota</taxon>
        <taxon>Metazoa</taxon>
        <taxon>Chordata</taxon>
        <taxon>Craniata</taxon>
        <taxon>Vertebrata</taxon>
        <taxon>Euteleostomi</taxon>
        <taxon>Mammalia</taxon>
        <taxon>Eutheria</taxon>
        <taxon>Euarchontoglires</taxon>
        <taxon>Primates</taxon>
        <taxon>Haplorrhini</taxon>
        <taxon>Catarrhini</taxon>
        <taxon>Hominidae</taxon>
        <taxon>Pongo</taxon>
    </lineage>
</organism>
<evidence type="ECO:0000250" key="1"/>
<evidence type="ECO:0000250" key="2">
    <source>
        <dbReference type="UniProtKB" id="Q56AP7"/>
    </source>
</evidence>
<evidence type="ECO:0000250" key="3">
    <source>
        <dbReference type="UniProtKB" id="Q8C7D2"/>
    </source>
</evidence>
<evidence type="ECO:0000250" key="4">
    <source>
        <dbReference type="UniProtKB" id="Q96SW2"/>
    </source>
</evidence>
<evidence type="ECO:0000255" key="5">
    <source>
        <dbReference type="PROSITE-ProRule" id="PRU01123"/>
    </source>
</evidence>
<evidence type="ECO:0000255" key="6">
    <source>
        <dbReference type="PROSITE-ProRule" id="PRU01124"/>
    </source>
</evidence>
<evidence type="ECO:0000256" key="7">
    <source>
        <dbReference type="SAM" id="MobiDB-lite"/>
    </source>
</evidence>
<evidence type="ECO:0000305" key="8"/>
<sequence length="429" mass="49245">MGNHLPLLPAESEEEDEMEVEDQDSKEAKKPNIINFDTSLPTSHTYLGADMEEFHGRTLHDDDSCQVIPVLPQVMMILIPGQTLPLQLFHPQEVSMVRNLIQKDRTFAVLAYSNIQEREAQFGTTAEIYAYREEQDFGIEIVKVKAIGRQRFKVLELRTQSDGIQQAKVQILPECVLPSTMSAVQLESLNKCQIFPPKPVSREDQCSYKWWQKYQKRKFHCANLTSWPRWLYSLYDAETLMDRIKKQLREWDENLKDDSLPSNPIDFSYRVAACLPIDDVLRIQLLKIGSAIQRLRCELDIMNKCTSLCCKQCQETEITTKNEIFSLSLCGPMAAYVNPHGYVHETLTVYKACNLNLIGRPSTEHSWFPGYAWTVAQCKICASHIGWKFTATKKDMSPQKFWGLTRSALLPTIPDTEDELSPDKVILCL</sequence>
<name>CRBN_PONAB</name>
<reference key="1">
    <citation type="submission" date="2004-11" db="EMBL/GenBank/DDBJ databases">
        <authorList>
            <consortium name="The German cDNA consortium"/>
        </authorList>
    </citation>
    <scope>NUCLEOTIDE SEQUENCE [LARGE SCALE MRNA]</scope>
    <source>
        <tissue>Brain cortex</tissue>
    </source>
</reference>
<protein>
    <recommendedName>
        <fullName>Protein cereblon</fullName>
    </recommendedName>
</protein>
<dbReference type="EMBL" id="CR860344">
    <property type="protein sequence ID" value="CAH92478.1"/>
    <property type="molecule type" value="mRNA"/>
</dbReference>
<dbReference type="RefSeq" id="NP_001127555.1">
    <property type="nucleotide sequence ID" value="NM_001134083.1"/>
</dbReference>
<dbReference type="SMR" id="Q5R6Y2"/>
<dbReference type="STRING" id="9601.ENSPPYP00000015323"/>
<dbReference type="GeneID" id="100174633"/>
<dbReference type="KEGG" id="pon:100174633"/>
<dbReference type="CTD" id="51185"/>
<dbReference type="eggNOG" id="KOG1400">
    <property type="taxonomic scope" value="Eukaryota"/>
</dbReference>
<dbReference type="InParanoid" id="Q5R6Y2"/>
<dbReference type="OrthoDB" id="267517at2759"/>
<dbReference type="UniPathway" id="UPA00143"/>
<dbReference type="Proteomes" id="UP000001595">
    <property type="component" value="Unplaced"/>
</dbReference>
<dbReference type="GO" id="GO:0031464">
    <property type="term" value="C:Cul4A-RING E3 ubiquitin ligase complex"/>
    <property type="evidence" value="ECO:0000250"/>
    <property type="project" value="UniProtKB"/>
</dbReference>
<dbReference type="GO" id="GO:0005737">
    <property type="term" value="C:cytoplasm"/>
    <property type="evidence" value="ECO:0000250"/>
    <property type="project" value="UniProtKB"/>
</dbReference>
<dbReference type="GO" id="GO:0016020">
    <property type="term" value="C:membrane"/>
    <property type="evidence" value="ECO:0007669"/>
    <property type="project" value="UniProtKB-SubCell"/>
</dbReference>
<dbReference type="GO" id="GO:0005634">
    <property type="term" value="C:nucleus"/>
    <property type="evidence" value="ECO:0000250"/>
    <property type="project" value="UniProtKB"/>
</dbReference>
<dbReference type="GO" id="GO:0046872">
    <property type="term" value="F:metal ion binding"/>
    <property type="evidence" value="ECO:0007669"/>
    <property type="project" value="UniProtKB-KW"/>
</dbReference>
<dbReference type="GO" id="GO:0043161">
    <property type="term" value="P:proteasome-mediated ubiquitin-dependent protein catabolic process"/>
    <property type="evidence" value="ECO:0000250"/>
    <property type="project" value="UniProtKB"/>
</dbReference>
<dbReference type="GO" id="GO:0016567">
    <property type="term" value="P:protein ubiquitination"/>
    <property type="evidence" value="ECO:0000250"/>
    <property type="project" value="UniProtKB"/>
</dbReference>
<dbReference type="CDD" id="cd15777">
    <property type="entry name" value="CRBN_C_like"/>
    <property type="match status" value="1"/>
</dbReference>
<dbReference type="FunFam" id="1.20.58.1480:FF:000004">
    <property type="entry name" value="Cereblon, isoform CRA_c"/>
    <property type="match status" value="1"/>
</dbReference>
<dbReference type="FunFam" id="2.30.130.40:FF:000002">
    <property type="entry name" value="Cereblon, isoform CRA_c"/>
    <property type="match status" value="1"/>
</dbReference>
<dbReference type="FunFam" id="2.170.150.20:FF:000007">
    <property type="entry name" value="Protein cereblon"/>
    <property type="match status" value="1"/>
</dbReference>
<dbReference type="Gene3D" id="1.20.58.1480">
    <property type="match status" value="1"/>
</dbReference>
<dbReference type="Gene3D" id="2.30.130.40">
    <property type="entry name" value="LON domain-like"/>
    <property type="match status" value="1"/>
</dbReference>
<dbReference type="Gene3D" id="2.170.150.20">
    <property type="entry name" value="Peptide methionine sulfoxide reductase"/>
    <property type="match status" value="1"/>
</dbReference>
<dbReference type="InterPro" id="IPR034750">
    <property type="entry name" value="CULT"/>
</dbReference>
<dbReference type="InterPro" id="IPR003111">
    <property type="entry name" value="Lon_prtase_N"/>
</dbReference>
<dbReference type="InterPro" id="IPR046336">
    <property type="entry name" value="Lon_prtase_N_sf"/>
</dbReference>
<dbReference type="InterPro" id="IPR015947">
    <property type="entry name" value="PUA-like_sf"/>
</dbReference>
<dbReference type="InterPro" id="IPR004910">
    <property type="entry name" value="Yippee/Mis18/Cereblon"/>
</dbReference>
<dbReference type="PANTHER" id="PTHR14255">
    <property type="entry name" value="CEREBLON"/>
    <property type="match status" value="1"/>
</dbReference>
<dbReference type="PANTHER" id="PTHR14255:SF4">
    <property type="entry name" value="PROTEIN CEREBLON"/>
    <property type="match status" value="1"/>
</dbReference>
<dbReference type="Pfam" id="PF02190">
    <property type="entry name" value="LON_substr_bdg"/>
    <property type="match status" value="1"/>
</dbReference>
<dbReference type="Pfam" id="PF03226">
    <property type="entry name" value="Yippee-Mis18"/>
    <property type="match status" value="1"/>
</dbReference>
<dbReference type="SMART" id="SM00464">
    <property type="entry name" value="LON"/>
    <property type="match status" value="1"/>
</dbReference>
<dbReference type="SUPFAM" id="SSF88697">
    <property type="entry name" value="PUA domain-like"/>
    <property type="match status" value="1"/>
</dbReference>
<dbReference type="PROSITE" id="PS51788">
    <property type="entry name" value="CULT"/>
    <property type="match status" value="1"/>
</dbReference>
<dbReference type="PROSITE" id="PS51787">
    <property type="entry name" value="LON_N"/>
    <property type="match status" value="1"/>
</dbReference>
<proteinExistence type="evidence at transcript level"/>
<gene>
    <name type="primary">CRBN</name>
</gene>
<comment type="function">
    <text evidence="3 4 8">Substrate recognition component of a DCX (DDB1-CUL4-X-box) E3 protein ligase complex that mediates the ubiquitination and subsequent proteasomal degradation of target proteins, such as MEIS2, ILF2 or GLUL. Normal degradation of key regulatory proteins is required for normal limb outgrowth and expression of the fibroblast growth factor FGF8. Maintains presynaptic glutamate release and consequently cognitive functions, such as memory and learning, by negatively regulating large-conductance calcium-activated potassium (BK) channels in excitatory neurons. Likely to function by regulating the assembly and neuronal surface expression of BK channels via its interaction with KCNT1 (By similarity). May also be involved in regulating anxiety-like behaviors via a BK channel-independent mechanism (By similarity). Plays a negative role in TLR4 signaling by interacting with TRAF6 and ECSIT, leading to inhibition of ECSIT ubiquitination, an important step of the signaling (By similarity).</text>
</comment>
<comment type="pathway">
    <text evidence="4">Protein modification; protein ubiquitination.</text>
</comment>
<comment type="subunit">
    <text evidence="2 4">Component of a DCX (DDB1-CUL4-X-box) protein ligase complex, at least composed of CRBN, CUL4A, DDB1 and RBX1. Interacts directly with DDB1 (By similarity). Interacts with KCNT1 (By similarity). Interacts with ILF2 (By similarity). Interacts with TRAF6 and ECSIT (By similarity).</text>
</comment>
<comment type="subcellular location">
    <subcellularLocation>
        <location evidence="4">Cytoplasm</location>
    </subcellularLocation>
    <subcellularLocation>
        <location evidence="4">Nucleus</location>
    </subcellularLocation>
    <subcellularLocation>
        <location evidence="1">Membrane</location>
        <topology evidence="1">Peripheral membrane protein</topology>
    </subcellularLocation>
</comment>
<comment type="PTM">
    <text evidence="4">Ubiquitinated, ubiquitination is mediated by its own DCX protein ligase complex.</text>
</comment>
<comment type="similarity">
    <text evidence="8">Belongs to the CRBN family.</text>
</comment>
<feature type="chain" id="PRO_0000076162" description="Protein cereblon">
    <location>
        <begin position="1"/>
        <end position="429"/>
    </location>
</feature>
<feature type="domain" description="Lon N-terminal" evidence="5">
    <location>
        <begin position="68"/>
        <end position="306"/>
    </location>
</feature>
<feature type="domain" description="CULT" evidence="6">
    <location>
        <begin position="305"/>
        <end position="413"/>
    </location>
</feature>
<feature type="region of interest" description="Disordered" evidence="7">
    <location>
        <begin position="1"/>
        <end position="30"/>
    </location>
</feature>
<feature type="compositionally biased region" description="Acidic residues" evidence="7">
    <location>
        <begin position="11"/>
        <end position="22"/>
    </location>
</feature>
<feature type="binding site" evidence="4">
    <location>
        <position position="310"/>
    </location>
    <ligand>
        <name>Zn(2+)</name>
        <dbReference type="ChEBI" id="CHEBI:29105"/>
    </ligand>
</feature>
<feature type="binding site" evidence="4">
    <location>
        <position position="313"/>
    </location>
    <ligand>
        <name>Zn(2+)</name>
        <dbReference type="ChEBI" id="CHEBI:29105"/>
    </ligand>
</feature>
<feature type="binding site" evidence="4">
    <location>
        <position position="365"/>
    </location>
    <ligand>
        <name>(S)-thalidomide</name>
        <dbReference type="ChEBI" id="CHEBI:61918"/>
    </ligand>
</feature>
<feature type="binding site" evidence="4">
    <location>
        <position position="367"/>
    </location>
    <ligand>
        <name>(S)-thalidomide</name>
        <dbReference type="ChEBI" id="CHEBI:61918"/>
    </ligand>
</feature>
<feature type="binding site" evidence="4">
    <location>
        <position position="373"/>
    </location>
    <ligand>
        <name>(S)-thalidomide</name>
        <dbReference type="ChEBI" id="CHEBI:61918"/>
    </ligand>
</feature>
<feature type="binding site" evidence="4">
    <location>
        <position position="378"/>
    </location>
    <ligand>
        <name>Zn(2+)</name>
        <dbReference type="ChEBI" id="CHEBI:29105"/>
    </ligand>
</feature>
<feature type="binding site" evidence="4">
    <location>
        <position position="381"/>
    </location>
    <ligand>
        <name>Zn(2+)</name>
        <dbReference type="ChEBI" id="CHEBI:29105"/>
    </ligand>
</feature>
<feature type="modified residue" description="Phosphoserine" evidence="4">
    <location>
        <position position="12"/>
    </location>
</feature>
<keyword id="KW-0963">Cytoplasm</keyword>
<keyword id="KW-0472">Membrane</keyword>
<keyword id="KW-0479">Metal-binding</keyword>
<keyword id="KW-0539">Nucleus</keyword>
<keyword id="KW-0597">Phosphoprotein</keyword>
<keyword id="KW-1185">Reference proteome</keyword>
<keyword id="KW-0832">Ubl conjugation</keyword>
<keyword id="KW-0833">Ubl conjugation pathway</keyword>
<keyword id="KW-0862">Zinc</keyword>